<proteinExistence type="inferred from homology"/>
<name>HIS1_METM6</name>
<keyword id="KW-0028">Amino-acid biosynthesis</keyword>
<keyword id="KW-0067">ATP-binding</keyword>
<keyword id="KW-0963">Cytoplasm</keyword>
<keyword id="KW-0328">Glycosyltransferase</keyword>
<keyword id="KW-0368">Histidine biosynthesis</keyword>
<keyword id="KW-0460">Magnesium</keyword>
<keyword id="KW-0479">Metal-binding</keyword>
<keyword id="KW-0547">Nucleotide-binding</keyword>
<keyword id="KW-0808">Transferase</keyword>
<accession>A9AAZ7</accession>
<reference key="1">
    <citation type="submission" date="2007-10" db="EMBL/GenBank/DDBJ databases">
        <title>Complete sequence of Methanococcus maripaludis C6.</title>
        <authorList>
            <consortium name="US DOE Joint Genome Institute"/>
            <person name="Copeland A."/>
            <person name="Lucas S."/>
            <person name="Lapidus A."/>
            <person name="Barry K."/>
            <person name="Glavina del Rio T."/>
            <person name="Dalin E."/>
            <person name="Tice H."/>
            <person name="Pitluck S."/>
            <person name="Clum A."/>
            <person name="Schmutz J."/>
            <person name="Larimer F."/>
            <person name="Land M."/>
            <person name="Hauser L."/>
            <person name="Kyrpides N."/>
            <person name="Mikhailova N."/>
            <person name="Sieprawska-Lupa M."/>
            <person name="Whitman W.B."/>
            <person name="Richardson P."/>
        </authorList>
    </citation>
    <scope>NUCLEOTIDE SEQUENCE [LARGE SCALE GENOMIC DNA]</scope>
    <source>
        <strain>C6 / ATCC BAA-1332</strain>
    </source>
</reference>
<protein>
    <recommendedName>
        <fullName evidence="1">ATP phosphoribosyltransferase</fullName>
        <shortName evidence="1">ATP-PRT</shortName>
        <shortName evidence="1">ATP-PRTase</shortName>
        <ecNumber evidence="1">2.4.2.17</ecNumber>
    </recommendedName>
</protein>
<dbReference type="EC" id="2.4.2.17" evidence="1"/>
<dbReference type="EMBL" id="CP000867">
    <property type="protein sequence ID" value="ABX02520.1"/>
    <property type="molecule type" value="Genomic_DNA"/>
</dbReference>
<dbReference type="SMR" id="A9AAZ7"/>
<dbReference type="STRING" id="444158.MmarC6_1708"/>
<dbReference type="KEGG" id="mmx:MmarC6_1708"/>
<dbReference type="eggNOG" id="arCOG02208">
    <property type="taxonomic scope" value="Archaea"/>
</dbReference>
<dbReference type="HOGENOM" id="CLU_038115_1_0_2"/>
<dbReference type="OrthoDB" id="33116at2157"/>
<dbReference type="PhylomeDB" id="A9AAZ7"/>
<dbReference type="UniPathway" id="UPA00031">
    <property type="reaction ID" value="UER00006"/>
</dbReference>
<dbReference type="GO" id="GO:0005737">
    <property type="term" value="C:cytoplasm"/>
    <property type="evidence" value="ECO:0007669"/>
    <property type="project" value="UniProtKB-SubCell"/>
</dbReference>
<dbReference type="GO" id="GO:0005524">
    <property type="term" value="F:ATP binding"/>
    <property type="evidence" value="ECO:0007669"/>
    <property type="project" value="UniProtKB-KW"/>
</dbReference>
<dbReference type="GO" id="GO:0003879">
    <property type="term" value="F:ATP phosphoribosyltransferase activity"/>
    <property type="evidence" value="ECO:0007669"/>
    <property type="project" value="UniProtKB-UniRule"/>
</dbReference>
<dbReference type="GO" id="GO:0000287">
    <property type="term" value="F:magnesium ion binding"/>
    <property type="evidence" value="ECO:0007669"/>
    <property type="project" value="UniProtKB-UniRule"/>
</dbReference>
<dbReference type="GO" id="GO:0000105">
    <property type="term" value="P:L-histidine biosynthetic process"/>
    <property type="evidence" value="ECO:0007669"/>
    <property type="project" value="UniProtKB-UniRule"/>
</dbReference>
<dbReference type="FunFam" id="3.30.70.120:FF:000002">
    <property type="entry name" value="ATP phosphoribosyltransferase"/>
    <property type="match status" value="1"/>
</dbReference>
<dbReference type="FunFam" id="3.40.190.10:FF:000008">
    <property type="entry name" value="ATP phosphoribosyltransferase"/>
    <property type="match status" value="1"/>
</dbReference>
<dbReference type="Gene3D" id="3.30.70.120">
    <property type="match status" value="1"/>
</dbReference>
<dbReference type="Gene3D" id="3.40.190.10">
    <property type="entry name" value="Periplasmic binding protein-like II"/>
    <property type="match status" value="2"/>
</dbReference>
<dbReference type="HAMAP" id="MF_00079">
    <property type="entry name" value="HisG_Long"/>
    <property type="match status" value="1"/>
</dbReference>
<dbReference type="InterPro" id="IPR020621">
    <property type="entry name" value="ATP-PRT_HisG_long"/>
</dbReference>
<dbReference type="InterPro" id="IPR013820">
    <property type="entry name" value="ATP_PRibTrfase_cat"/>
</dbReference>
<dbReference type="InterPro" id="IPR018198">
    <property type="entry name" value="ATP_PRibTrfase_CS"/>
</dbReference>
<dbReference type="InterPro" id="IPR001348">
    <property type="entry name" value="ATP_PRibTrfase_HisG"/>
</dbReference>
<dbReference type="InterPro" id="IPR013115">
    <property type="entry name" value="HisG_C"/>
</dbReference>
<dbReference type="InterPro" id="IPR011322">
    <property type="entry name" value="N-reg_PII-like_a/b"/>
</dbReference>
<dbReference type="InterPro" id="IPR015867">
    <property type="entry name" value="N-reg_PII/ATP_PRibTrfase_C"/>
</dbReference>
<dbReference type="NCBIfam" id="TIGR00070">
    <property type="entry name" value="hisG"/>
    <property type="match status" value="1"/>
</dbReference>
<dbReference type="NCBIfam" id="TIGR03455">
    <property type="entry name" value="HisG_C-term"/>
    <property type="match status" value="1"/>
</dbReference>
<dbReference type="PANTHER" id="PTHR21403:SF10">
    <property type="entry name" value="ATP PHOSPHORIBOSYLTRANSFERASE"/>
    <property type="match status" value="1"/>
</dbReference>
<dbReference type="PANTHER" id="PTHR21403">
    <property type="entry name" value="ATP PHOSPHORIBOSYLTRANSFERASE ATP-PRTASE"/>
    <property type="match status" value="1"/>
</dbReference>
<dbReference type="Pfam" id="PF01634">
    <property type="entry name" value="HisG"/>
    <property type="match status" value="1"/>
</dbReference>
<dbReference type="Pfam" id="PF08029">
    <property type="entry name" value="HisG_C"/>
    <property type="match status" value="1"/>
</dbReference>
<dbReference type="SUPFAM" id="SSF54913">
    <property type="entry name" value="GlnB-like"/>
    <property type="match status" value="1"/>
</dbReference>
<dbReference type="SUPFAM" id="SSF53850">
    <property type="entry name" value="Periplasmic binding protein-like II"/>
    <property type="match status" value="1"/>
</dbReference>
<dbReference type="PROSITE" id="PS01316">
    <property type="entry name" value="ATP_P_PHORIBOSYLTR"/>
    <property type="match status" value="1"/>
</dbReference>
<feature type="chain" id="PRO_1000092738" description="ATP phosphoribosyltransferase">
    <location>
        <begin position="1"/>
        <end position="288"/>
    </location>
</feature>
<gene>
    <name evidence="1" type="primary">hisG</name>
    <name type="ordered locus">MmarC6_1708</name>
</gene>
<evidence type="ECO:0000255" key="1">
    <source>
        <dbReference type="HAMAP-Rule" id="MF_00079"/>
    </source>
</evidence>
<organism>
    <name type="scientific">Methanococcus maripaludis (strain C6 / ATCC BAA-1332)</name>
    <dbReference type="NCBI Taxonomy" id="444158"/>
    <lineage>
        <taxon>Archaea</taxon>
        <taxon>Methanobacteriati</taxon>
        <taxon>Methanobacteriota</taxon>
        <taxon>Methanomada group</taxon>
        <taxon>Methanococci</taxon>
        <taxon>Methanococcales</taxon>
        <taxon>Methanococcaceae</taxon>
        <taxon>Methanococcus</taxon>
    </lineage>
</organism>
<comment type="function">
    <text evidence="1">Catalyzes the condensation of ATP and 5-phosphoribose 1-diphosphate to form N'-(5'-phosphoribosyl)-ATP (PR-ATP). Has a crucial role in the pathway because the rate of histidine biosynthesis seems to be controlled primarily by regulation of HisG enzymatic activity.</text>
</comment>
<comment type="catalytic activity">
    <reaction evidence="1">
        <text>1-(5-phospho-beta-D-ribosyl)-ATP + diphosphate = 5-phospho-alpha-D-ribose 1-diphosphate + ATP</text>
        <dbReference type="Rhea" id="RHEA:18473"/>
        <dbReference type="ChEBI" id="CHEBI:30616"/>
        <dbReference type="ChEBI" id="CHEBI:33019"/>
        <dbReference type="ChEBI" id="CHEBI:58017"/>
        <dbReference type="ChEBI" id="CHEBI:73183"/>
        <dbReference type="EC" id="2.4.2.17"/>
    </reaction>
</comment>
<comment type="cofactor">
    <cofactor evidence="1">
        <name>Mg(2+)</name>
        <dbReference type="ChEBI" id="CHEBI:18420"/>
    </cofactor>
</comment>
<comment type="activity regulation">
    <text evidence="1">Feedback inhibited by histidine.</text>
</comment>
<comment type="pathway">
    <text evidence="1">Amino-acid biosynthesis; L-histidine biosynthesis; L-histidine from 5-phospho-alpha-D-ribose 1-diphosphate: step 1/9.</text>
</comment>
<comment type="subcellular location">
    <subcellularLocation>
        <location evidence="1">Cytoplasm</location>
    </subcellularLocation>
</comment>
<comment type="similarity">
    <text evidence="1">Belongs to the ATP phosphoribosyltransferase family. Long subfamily.</text>
</comment>
<sequence length="288" mass="31627">MILLALPNKGRISKPVNEILEKSGLKISVHGRSLFAQTVDPEIKVMFARAKDIPEFVRDGVADVGVTGYDLMLERDTEEELEMLLDFKFGNARLVIAAPENSSVNSIDDVKDGMKIATEFPGLTKRYLEKKGLNLEIIELSGATEIAPFIGVSDLICDLTSTGTTLQLNRLKEVENVVSSTTRLVANKKSMENPEKCVKINQVLSGIKSVLYAQSKRLIMMNAPKDKVSEITSIIPGMGGPTVSEILSNDKMLAINAVIDENKVFETVTNLERLGARDILVVPIERIL</sequence>